<name>PTH_NOSS1</name>
<proteinExistence type="inferred from homology"/>
<reference key="1">
    <citation type="journal article" date="2001" name="DNA Res.">
        <title>Complete genomic sequence of the filamentous nitrogen-fixing cyanobacterium Anabaena sp. strain PCC 7120.</title>
        <authorList>
            <person name="Kaneko T."/>
            <person name="Nakamura Y."/>
            <person name="Wolk C.P."/>
            <person name="Kuritz T."/>
            <person name="Sasamoto S."/>
            <person name="Watanabe A."/>
            <person name="Iriguchi M."/>
            <person name="Ishikawa A."/>
            <person name="Kawashima K."/>
            <person name="Kimura T."/>
            <person name="Kishida Y."/>
            <person name="Kohara M."/>
            <person name="Matsumoto M."/>
            <person name="Matsuno A."/>
            <person name="Muraki A."/>
            <person name="Nakazaki N."/>
            <person name="Shimpo S."/>
            <person name="Sugimoto M."/>
            <person name="Takazawa M."/>
            <person name="Yamada M."/>
            <person name="Yasuda M."/>
            <person name="Tabata S."/>
        </authorList>
    </citation>
    <scope>NUCLEOTIDE SEQUENCE [LARGE SCALE GENOMIC DNA]</scope>
    <source>
        <strain>PCC 7120 / SAG 25.82 / UTEX 2576</strain>
    </source>
</reference>
<gene>
    <name evidence="1" type="primary">pth</name>
    <name type="ordered locus">all0844</name>
</gene>
<evidence type="ECO:0000255" key="1">
    <source>
        <dbReference type="HAMAP-Rule" id="MF_00083"/>
    </source>
</evidence>
<keyword id="KW-0963">Cytoplasm</keyword>
<keyword id="KW-0378">Hydrolase</keyword>
<keyword id="KW-1185">Reference proteome</keyword>
<keyword id="KW-0694">RNA-binding</keyword>
<keyword id="KW-0820">tRNA-binding</keyword>
<dbReference type="EC" id="3.1.1.29" evidence="1"/>
<dbReference type="EMBL" id="BA000019">
    <property type="protein sequence ID" value="BAB72801.1"/>
    <property type="molecule type" value="Genomic_DNA"/>
</dbReference>
<dbReference type="PIR" id="AB1912">
    <property type="entry name" value="AB1912"/>
</dbReference>
<dbReference type="SMR" id="Q8YYK4"/>
<dbReference type="STRING" id="103690.gene:10492856"/>
<dbReference type="KEGG" id="ana:all0844"/>
<dbReference type="eggNOG" id="COG0193">
    <property type="taxonomic scope" value="Bacteria"/>
</dbReference>
<dbReference type="Proteomes" id="UP000002483">
    <property type="component" value="Chromosome"/>
</dbReference>
<dbReference type="GO" id="GO:0005737">
    <property type="term" value="C:cytoplasm"/>
    <property type="evidence" value="ECO:0007669"/>
    <property type="project" value="UniProtKB-SubCell"/>
</dbReference>
<dbReference type="GO" id="GO:0004045">
    <property type="term" value="F:peptidyl-tRNA hydrolase activity"/>
    <property type="evidence" value="ECO:0007669"/>
    <property type="project" value="UniProtKB-UniRule"/>
</dbReference>
<dbReference type="GO" id="GO:0000049">
    <property type="term" value="F:tRNA binding"/>
    <property type="evidence" value="ECO:0007669"/>
    <property type="project" value="UniProtKB-UniRule"/>
</dbReference>
<dbReference type="GO" id="GO:0006515">
    <property type="term" value="P:protein quality control for misfolded or incompletely synthesized proteins"/>
    <property type="evidence" value="ECO:0007669"/>
    <property type="project" value="UniProtKB-UniRule"/>
</dbReference>
<dbReference type="GO" id="GO:0072344">
    <property type="term" value="P:rescue of stalled ribosome"/>
    <property type="evidence" value="ECO:0007669"/>
    <property type="project" value="UniProtKB-UniRule"/>
</dbReference>
<dbReference type="CDD" id="cd00462">
    <property type="entry name" value="PTH"/>
    <property type="match status" value="1"/>
</dbReference>
<dbReference type="FunFam" id="3.40.50.1470:FF:000001">
    <property type="entry name" value="Peptidyl-tRNA hydrolase"/>
    <property type="match status" value="1"/>
</dbReference>
<dbReference type="Gene3D" id="3.40.50.1470">
    <property type="entry name" value="Peptidyl-tRNA hydrolase"/>
    <property type="match status" value="1"/>
</dbReference>
<dbReference type="HAMAP" id="MF_00083">
    <property type="entry name" value="Pept_tRNA_hydro_bact"/>
    <property type="match status" value="1"/>
</dbReference>
<dbReference type="InterPro" id="IPR001328">
    <property type="entry name" value="Pept_tRNA_hydro"/>
</dbReference>
<dbReference type="InterPro" id="IPR018171">
    <property type="entry name" value="Pept_tRNA_hydro_CS"/>
</dbReference>
<dbReference type="InterPro" id="IPR036416">
    <property type="entry name" value="Pept_tRNA_hydro_sf"/>
</dbReference>
<dbReference type="NCBIfam" id="TIGR00447">
    <property type="entry name" value="pth"/>
    <property type="match status" value="1"/>
</dbReference>
<dbReference type="PANTHER" id="PTHR17224">
    <property type="entry name" value="PEPTIDYL-TRNA HYDROLASE"/>
    <property type="match status" value="1"/>
</dbReference>
<dbReference type="PANTHER" id="PTHR17224:SF1">
    <property type="entry name" value="PEPTIDYL-TRNA HYDROLASE"/>
    <property type="match status" value="1"/>
</dbReference>
<dbReference type="Pfam" id="PF01195">
    <property type="entry name" value="Pept_tRNA_hydro"/>
    <property type="match status" value="1"/>
</dbReference>
<dbReference type="SUPFAM" id="SSF53178">
    <property type="entry name" value="Peptidyl-tRNA hydrolase-like"/>
    <property type="match status" value="1"/>
</dbReference>
<dbReference type="PROSITE" id="PS01195">
    <property type="entry name" value="PEPT_TRNA_HYDROL_1"/>
    <property type="match status" value="1"/>
</dbReference>
<comment type="function">
    <text evidence="1">Hydrolyzes ribosome-free peptidyl-tRNAs (with 1 or more amino acids incorporated), which drop off the ribosome during protein synthesis, or as a result of ribosome stalling.</text>
</comment>
<comment type="function">
    <text evidence="1">Catalyzes the release of premature peptidyl moieties from peptidyl-tRNA molecules trapped in stalled 50S ribosomal subunits, and thus maintains levels of free tRNAs and 50S ribosomes.</text>
</comment>
<comment type="catalytic activity">
    <reaction evidence="1">
        <text>an N-acyl-L-alpha-aminoacyl-tRNA + H2O = an N-acyl-L-amino acid + a tRNA + H(+)</text>
        <dbReference type="Rhea" id="RHEA:54448"/>
        <dbReference type="Rhea" id="RHEA-COMP:10123"/>
        <dbReference type="Rhea" id="RHEA-COMP:13883"/>
        <dbReference type="ChEBI" id="CHEBI:15377"/>
        <dbReference type="ChEBI" id="CHEBI:15378"/>
        <dbReference type="ChEBI" id="CHEBI:59874"/>
        <dbReference type="ChEBI" id="CHEBI:78442"/>
        <dbReference type="ChEBI" id="CHEBI:138191"/>
        <dbReference type="EC" id="3.1.1.29"/>
    </reaction>
</comment>
<comment type="subunit">
    <text evidence="1">Monomer.</text>
</comment>
<comment type="subcellular location">
    <subcellularLocation>
        <location evidence="1">Cytoplasm</location>
    </subcellularLocation>
</comment>
<comment type="similarity">
    <text evidence="1">Belongs to the PTH family.</text>
</comment>
<accession>Q8YYK4</accession>
<feature type="chain" id="PRO_0000187680" description="Peptidyl-tRNA hydrolase">
    <location>
        <begin position="1"/>
        <end position="203"/>
    </location>
</feature>
<feature type="active site" description="Proton acceptor" evidence="1">
    <location>
        <position position="21"/>
    </location>
</feature>
<feature type="binding site" evidence="1">
    <location>
        <position position="16"/>
    </location>
    <ligand>
        <name>tRNA</name>
        <dbReference type="ChEBI" id="CHEBI:17843"/>
    </ligand>
</feature>
<feature type="binding site" evidence="1">
    <location>
        <position position="68"/>
    </location>
    <ligand>
        <name>tRNA</name>
        <dbReference type="ChEBI" id="CHEBI:17843"/>
    </ligand>
</feature>
<feature type="binding site" evidence="1">
    <location>
        <position position="70"/>
    </location>
    <ligand>
        <name>tRNA</name>
        <dbReference type="ChEBI" id="CHEBI:17843"/>
    </ligand>
</feature>
<feature type="binding site" evidence="1">
    <location>
        <position position="116"/>
    </location>
    <ligand>
        <name>tRNA</name>
        <dbReference type="ChEBI" id="CHEBI:17843"/>
    </ligand>
</feature>
<feature type="site" description="Discriminates between blocked and unblocked aminoacyl-tRNA" evidence="1">
    <location>
        <position position="11"/>
    </location>
</feature>
<feature type="site" description="Stabilizes the basic form of H active site to accept a proton" evidence="1">
    <location>
        <position position="95"/>
    </location>
</feature>
<organism>
    <name type="scientific">Nostoc sp. (strain PCC 7120 / SAG 25.82 / UTEX 2576)</name>
    <dbReference type="NCBI Taxonomy" id="103690"/>
    <lineage>
        <taxon>Bacteria</taxon>
        <taxon>Bacillati</taxon>
        <taxon>Cyanobacteriota</taxon>
        <taxon>Cyanophyceae</taxon>
        <taxon>Nostocales</taxon>
        <taxon>Nostocaceae</taxon>
        <taxon>Nostoc</taxon>
    </lineage>
</organism>
<protein>
    <recommendedName>
        <fullName evidence="1">Peptidyl-tRNA hydrolase</fullName>
        <shortName evidence="1">Pth</shortName>
        <ecNumber evidence="1">3.1.1.29</ecNumber>
    </recommendedName>
</protein>
<sequence>MIPQLIVGLGNPEPKYDQTRHNIGFAAVDALARAWNISLAENRKFQGQYGEGTAPGGVKIRLLKPLTYMNRSGQAIQAVTSWYKLSGESVLVIYDDLDLPLGKTRLRLSGSAGGHNGMKSAIAHLSTQNFPRLRIGIGKPKNAVNGDNSETVSHVLGKFSATETQLMSLVLQFVVECVELSLKQGVEKAMNRCNSCTVEAPKS</sequence>